<protein>
    <recommendedName>
        <fullName evidence="1">UDP-N-acetylenolpyruvoylglucosamine reductase</fullName>
        <ecNumber evidence="1">1.3.1.98</ecNumber>
    </recommendedName>
    <alternativeName>
        <fullName evidence="1">UDP-N-acetylmuramate dehydrogenase</fullName>
    </alternativeName>
</protein>
<gene>
    <name evidence="1" type="primary">murB</name>
    <name type="ordered locus">SPJ_1289</name>
</gene>
<proteinExistence type="inferred from homology"/>
<evidence type="ECO:0000255" key="1">
    <source>
        <dbReference type="HAMAP-Rule" id="MF_00037"/>
    </source>
</evidence>
<keyword id="KW-0131">Cell cycle</keyword>
<keyword id="KW-0132">Cell division</keyword>
<keyword id="KW-0133">Cell shape</keyword>
<keyword id="KW-0961">Cell wall biogenesis/degradation</keyword>
<keyword id="KW-0963">Cytoplasm</keyword>
<keyword id="KW-0274">FAD</keyword>
<keyword id="KW-0285">Flavoprotein</keyword>
<keyword id="KW-0521">NADP</keyword>
<keyword id="KW-0560">Oxidoreductase</keyword>
<keyword id="KW-0573">Peptidoglycan synthesis</keyword>
<name>MURB_STRZJ</name>
<feature type="chain" id="PRO_1000117144" description="UDP-N-acetylenolpyruvoylglucosamine reductase">
    <location>
        <begin position="1"/>
        <end position="301"/>
    </location>
</feature>
<feature type="domain" description="FAD-binding PCMH-type" evidence="1">
    <location>
        <begin position="30"/>
        <end position="194"/>
    </location>
</feature>
<feature type="active site" evidence="1">
    <location>
        <position position="173"/>
    </location>
</feature>
<feature type="active site" description="Proton donor" evidence="1">
    <location>
        <position position="223"/>
    </location>
</feature>
<feature type="active site" evidence="1">
    <location>
        <position position="293"/>
    </location>
</feature>
<accession>C1CEX8</accession>
<reference key="1">
    <citation type="journal article" date="2010" name="Genome Biol.">
        <title>Structure and dynamics of the pan-genome of Streptococcus pneumoniae and closely related species.</title>
        <authorList>
            <person name="Donati C."/>
            <person name="Hiller N.L."/>
            <person name="Tettelin H."/>
            <person name="Muzzi A."/>
            <person name="Croucher N.J."/>
            <person name="Angiuoli S.V."/>
            <person name="Oggioni M."/>
            <person name="Dunning Hotopp J.C."/>
            <person name="Hu F.Z."/>
            <person name="Riley D.R."/>
            <person name="Covacci A."/>
            <person name="Mitchell T.J."/>
            <person name="Bentley S.D."/>
            <person name="Kilian M."/>
            <person name="Ehrlich G.D."/>
            <person name="Rappuoli R."/>
            <person name="Moxon E.R."/>
            <person name="Masignani V."/>
        </authorList>
    </citation>
    <scope>NUCLEOTIDE SEQUENCE [LARGE SCALE GENOMIC DNA]</scope>
    <source>
        <strain>JJA</strain>
    </source>
</reference>
<comment type="function">
    <text evidence="1">Cell wall formation.</text>
</comment>
<comment type="catalytic activity">
    <reaction evidence="1">
        <text>UDP-N-acetyl-alpha-D-muramate + NADP(+) = UDP-N-acetyl-3-O-(1-carboxyvinyl)-alpha-D-glucosamine + NADPH + H(+)</text>
        <dbReference type="Rhea" id="RHEA:12248"/>
        <dbReference type="ChEBI" id="CHEBI:15378"/>
        <dbReference type="ChEBI" id="CHEBI:57783"/>
        <dbReference type="ChEBI" id="CHEBI:58349"/>
        <dbReference type="ChEBI" id="CHEBI:68483"/>
        <dbReference type="ChEBI" id="CHEBI:70757"/>
        <dbReference type="EC" id="1.3.1.98"/>
    </reaction>
</comment>
<comment type="cofactor">
    <cofactor evidence="1">
        <name>FAD</name>
        <dbReference type="ChEBI" id="CHEBI:57692"/>
    </cofactor>
</comment>
<comment type="pathway">
    <text evidence="1">Cell wall biogenesis; peptidoglycan biosynthesis.</text>
</comment>
<comment type="subcellular location">
    <subcellularLocation>
        <location evidence="1">Cytoplasm</location>
    </subcellularLocation>
</comment>
<comment type="similarity">
    <text evidence="1">Belongs to the MurB family.</text>
</comment>
<organism>
    <name type="scientific">Streptococcus pneumoniae (strain JJA)</name>
    <dbReference type="NCBI Taxonomy" id="488222"/>
    <lineage>
        <taxon>Bacteria</taxon>
        <taxon>Bacillati</taxon>
        <taxon>Bacillota</taxon>
        <taxon>Bacilli</taxon>
        <taxon>Lactobacillales</taxon>
        <taxon>Streptococcaceae</taxon>
        <taxon>Streptococcus</taxon>
    </lineage>
</organism>
<sequence length="301" mass="32970">MSVREKMLEILEGIDIRFKEPLHSYSYTKVGGEADYLVFPRNRFELARLVKFANQENIPWMVLGNASNIIVRDGGIRGFVILCDKLNNVSVDGYTIEAEAGANLIETTRIALRHSLTGFEFACGIPGSVGGAVFMNAGAYGGEIAHILQSCKVLTKDGEIETLSAKDLAFGYRHSAIQESGAVVLSVKFALAPGTHQVIKQEMDRLTHLRELKQPLEYPSCGSVFKRPVGHFAGQLISEAGLKGYRIGGVEVSEKHAGFMINVADGTAKDYEDLIQSVIEKVKEHSGITLEREVRILGESK</sequence>
<dbReference type="EC" id="1.3.1.98" evidence="1"/>
<dbReference type="EMBL" id="CP000919">
    <property type="protein sequence ID" value="ACO19418.1"/>
    <property type="molecule type" value="Genomic_DNA"/>
</dbReference>
<dbReference type="RefSeq" id="WP_000116169.1">
    <property type="nucleotide sequence ID" value="NC_012466.1"/>
</dbReference>
<dbReference type="SMR" id="C1CEX8"/>
<dbReference type="GeneID" id="45653351"/>
<dbReference type="KEGG" id="sjj:SPJ_1289"/>
<dbReference type="HOGENOM" id="CLU_035304_1_1_9"/>
<dbReference type="UniPathway" id="UPA00219"/>
<dbReference type="Proteomes" id="UP000002206">
    <property type="component" value="Chromosome"/>
</dbReference>
<dbReference type="GO" id="GO:0005829">
    <property type="term" value="C:cytosol"/>
    <property type="evidence" value="ECO:0007669"/>
    <property type="project" value="TreeGrafter"/>
</dbReference>
<dbReference type="GO" id="GO:0071949">
    <property type="term" value="F:FAD binding"/>
    <property type="evidence" value="ECO:0007669"/>
    <property type="project" value="InterPro"/>
</dbReference>
<dbReference type="GO" id="GO:0008762">
    <property type="term" value="F:UDP-N-acetylmuramate dehydrogenase activity"/>
    <property type="evidence" value="ECO:0007669"/>
    <property type="project" value="UniProtKB-UniRule"/>
</dbReference>
<dbReference type="GO" id="GO:0051301">
    <property type="term" value="P:cell division"/>
    <property type="evidence" value="ECO:0007669"/>
    <property type="project" value="UniProtKB-KW"/>
</dbReference>
<dbReference type="GO" id="GO:0071555">
    <property type="term" value="P:cell wall organization"/>
    <property type="evidence" value="ECO:0007669"/>
    <property type="project" value="UniProtKB-KW"/>
</dbReference>
<dbReference type="GO" id="GO:0009252">
    <property type="term" value="P:peptidoglycan biosynthetic process"/>
    <property type="evidence" value="ECO:0007669"/>
    <property type="project" value="UniProtKB-UniRule"/>
</dbReference>
<dbReference type="GO" id="GO:0008360">
    <property type="term" value="P:regulation of cell shape"/>
    <property type="evidence" value="ECO:0007669"/>
    <property type="project" value="UniProtKB-KW"/>
</dbReference>
<dbReference type="Gene3D" id="3.30.465.10">
    <property type="match status" value="1"/>
</dbReference>
<dbReference type="Gene3D" id="3.90.78.10">
    <property type="entry name" value="UDP-N-acetylenolpyruvoylglucosamine reductase, C-terminal domain"/>
    <property type="match status" value="1"/>
</dbReference>
<dbReference type="Gene3D" id="3.30.43.10">
    <property type="entry name" value="Uridine Diphospho-n-acetylenolpyruvylglucosamine Reductase, domain 2"/>
    <property type="match status" value="1"/>
</dbReference>
<dbReference type="HAMAP" id="MF_00037">
    <property type="entry name" value="MurB"/>
    <property type="match status" value="1"/>
</dbReference>
<dbReference type="InterPro" id="IPR016166">
    <property type="entry name" value="FAD-bd_PCMH"/>
</dbReference>
<dbReference type="InterPro" id="IPR036318">
    <property type="entry name" value="FAD-bd_PCMH-like_sf"/>
</dbReference>
<dbReference type="InterPro" id="IPR016167">
    <property type="entry name" value="FAD-bd_PCMH_sub1"/>
</dbReference>
<dbReference type="InterPro" id="IPR016169">
    <property type="entry name" value="FAD-bd_PCMH_sub2"/>
</dbReference>
<dbReference type="InterPro" id="IPR003170">
    <property type="entry name" value="MurB"/>
</dbReference>
<dbReference type="InterPro" id="IPR011601">
    <property type="entry name" value="MurB_C"/>
</dbReference>
<dbReference type="InterPro" id="IPR036635">
    <property type="entry name" value="MurB_C_sf"/>
</dbReference>
<dbReference type="InterPro" id="IPR006094">
    <property type="entry name" value="Oxid_FAD_bind_N"/>
</dbReference>
<dbReference type="NCBIfam" id="TIGR00179">
    <property type="entry name" value="murB"/>
    <property type="match status" value="1"/>
</dbReference>
<dbReference type="NCBIfam" id="NF010480">
    <property type="entry name" value="PRK13905.1"/>
    <property type="match status" value="1"/>
</dbReference>
<dbReference type="PANTHER" id="PTHR21071">
    <property type="entry name" value="UDP-N-ACETYLENOLPYRUVOYLGLUCOSAMINE REDUCTASE"/>
    <property type="match status" value="1"/>
</dbReference>
<dbReference type="PANTHER" id="PTHR21071:SF4">
    <property type="entry name" value="UDP-N-ACETYLENOLPYRUVOYLGLUCOSAMINE REDUCTASE"/>
    <property type="match status" value="1"/>
</dbReference>
<dbReference type="Pfam" id="PF01565">
    <property type="entry name" value="FAD_binding_4"/>
    <property type="match status" value="1"/>
</dbReference>
<dbReference type="Pfam" id="PF02873">
    <property type="entry name" value="MurB_C"/>
    <property type="match status" value="1"/>
</dbReference>
<dbReference type="SUPFAM" id="SSF56176">
    <property type="entry name" value="FAD-binding/transporter-associated domain-like"/>
    <property type="match status" value="1"/>
</dbReference>
<dbReference type="SUPFAM" id="SSF56194">
    <property type="entry name" value="Uridine diphospho-N-Acetylenolpyruvylglucosamine reductase, MurB, C-terminal domain"/>
    <property type="match status" value="1"/>
</dbReference>
<dbReference type="PROSITE" id="PS51387">
    <property type="entry name" value="FAD_PCMH"/>
    <property type="match status" value="1"/>
</dbReference>